<proteinExistence type="inferred from homology"/>
<organism>
    <name type="scientific">Rickettsia typhi (strain ATCC VR-144 / Wilmington)</name>
    <dbReference type="NCBI Taxonomy" id="257363"/>
    <lineage>
        <taxon>Bacteria</taxon>
        <taxon>Pseudomonadati</taxon>
        <taxon>Pseudomonadota</taxon>
        <taxon>Alphaproteobacteria</taxon>
        <taxon>Rickettsiales</taxon>
        <taxon>Rickettsiaceae</taxon>
        <taxon>Rickettsieae</taxon>
        <taxon>Rickettsia</taxon>
        <taxon>typhus group</taxon>
    </lineage>
</organism>
<keyword id="KW-1003">Cell membrane</keyword>
<keyword id="KW-0210">Decarboxylase</keyword>
<keyword id="KW-0444">Lipid biosynthesis</keyword>
<keyword id="KW-0443">Lipid metabolism</keyword>
<keyword id="KW-0456">Lyase</keyword>
<keyword id="KW-0472">Membrane</keyword>
<keyword id="KW-0594">Phospholipid biosynthesis</keyword>
<keyword id="KW-1208">Phospholipid metabolism</keyword>
<keyword id="KW-0670">Pyruvate</keyword>
<keyword id="KW-0865">Zymogen</keyword>
<accession>Q68XC8</accession>
<gene>
    <name evidence="1" type="primary">psd</name>
    <name type="ordered locus">RT0233</name>
</gene>
<dbReference type="EC" id="4.1.1.65" evidence="1"/>
<dbReference type="EMBL" id="AE017197">
    <property type="protein sequence ID" value="AAU03714.1"/>
    <property type="molecule type" value="Genomic_DNA"/>
</dbReference>
<dbReference type="RefSeq" id="WP_004598533.1">
    <property type="nucleotide sequence ID" value="NC_006142.1"/>
</dbReference>
<dbReference type="SMR" id="Q68XC8"/>
<dbReference type="KEGG" id="rty:RT0233"/>
<dbReference type="eggNOG" id="COG0688">
    <property type="taxonomic scope" value="Bacteria"/>
</dbReference>
<dbReference type="HOGENOM" id="CLU_072492_0_0_5"/>
<dbReference type="OrthoDB" id="9790893at2"/>
<dbReference type="UniPathway" id="UPA00558">
    <property type="reaction ID" value="UER00616"/>
</dbReference>
<dbReference type="Proteomes" id="UP000000604">
    <property type="component" value="Chromosome"/>
</dbReference>
<dbReference type="GO" id="GO:0005886">
    <property type="term" value="C:plasma membrane"/>
    <property type="evidence" value="ECO:0007669"/>
    <property type="project" value="UniProtKB-SubCell"/>
</dbReference>
<dbReference type="GO" id="GO:0004609">
    <property type="term" value="F:phosphatidylserine decarboxylase activity"/>
    <property type="evidence" value="ECO:0007669"/>
    <property type="project" value="UniProtKB-UniRule"/>
</dbReference>
<dbReference type="GO" id="GO:0006646">
    <property type="term" value="P:phosphatidylethanolamine biosynthetic process"/>
    <property type="evidence" value="ECO:0007669"/>
    <property type="project" value="UniProtKB-UniRule"/>
</dbReference>
<dbReference type="HAMAP" id="MF_00664">
    <property type="entry name" value="PS_decarb_PSD_A"/>
    <property type="match status" value="1"/>
</dbReference>
<dbReference type="InterPro" id="IPR003817">
    <property type="entry name" value="PS_Dcarbxylase"/>
</dbReference>
<dbReference type="InterPro" id="IPR033175">
    <property type="entry name" value="PSD-A"/>
</dbReference>
<dbReference type="NCBIfam" id="NF003677">
    <property type="entry name" value="PRK05305.1-1"/>
    <property type="match status" value="1"/>
</dbReference>
<dbReference type="NCBIfam" id="NF003678">
    <property type="entry name" value="PRK05305.1-2"/>
    <property type="match status" value="1"/>
</dbReference>
<dbReference type="NCBIfam" id="NF003679">
    <property type="entry name" value="PRK05305.1-3"/>
    <property type="match status" value="1"/>
</dbReference>
<dbReference type="NCBIfam" id="NF003681">
    <property type="entry name" value="PRK05305.2-1"/>
    <property type="match status" value="1"/>
</dbReference>
<dbReference type="NCBIfam" id="NF003685">
    <property type="entry name" value="PRK05305.2-5"/>
    <property type="match status" value="1"/>
</dbReference>
<dbReference type="PANTHER" id="PTHR35809">
    <property type="entry name" value="ARCHAETIDYLSERINE DECARBOXYLASE PROENZYME-RELATED"/>
    <property type="match status" value="1"/>
</dbReference>
<dbReference type="PANTHER" id="PTHR35809:SF1">
    <property type="entry name" value="ARCHAETIDYLSERINE DECARBOXYLASE PROENZYME-RELATED"/>
    <property type="match status" value="1"/>
</dbReference>
<dbReference type="Pfam" id="PF02666">
    <property type="entry name" value="PS_Dcarbxylase"/>
    <property type="match status" value="1"/>
</dbReference>
<sequence>MKQYNDLFKIIHREGYIFIASFALVSFLLASFNEKLGCIGFIATIWCIYFFRNPDRFVPISDDLVISPADGIIQEIKEASPPPELGLGDLEMIRVSIFLNIFNIHVNRIPANGKILALHYNPGKFFNASLDKASLYNERQSVLMETDQGQKIVFVQIAGLIARRIVCDLEEDNEVKMGERYGIIRFGSRVDVYLPLKTALLVSKGQTAIGGETIIADFGRKKTEEFKFERK</sequence>
<protein>
    <recommendedName>
        <fullName evidence="1">Phosphatidylserine decarboxylase proenzyme</fullName>
        <ecNumber evidence="1">4.1.1.65</ecNumber>
    </recommendedName>
    <component>
        <recommendedName>
            <fullName evidence="1">Phosphatidylserine decarboxylase alpha chain</fullName>
        </recommendedName>
    </component>
    <component>
        <recommendedName>
            <fullName evidence="1">Phosphatidylserine decarboxylase beta chain</fullName>
        </recommendedName>
    </component>
</protein>
<comment type="function">
    <text evidence="1">Catalyzes the formation of phosphatidylethanolamine (PtdEtn) from phosphatidylserine (PtdSer).</text>
</comment>
<comment type="catalytic activity">
    <reaction evidence="1">
        <text>a 1,2-diacyl-sn-glycero-3-phospho-L-serine + H(+) = a 1,2-diacyl-sn-glycero-3-phosphoethanolamine + CO2</text>
        <dbReference type="Rhea" id="RHEA:20828"/>
        <dbReference type="ChEBI" id="CHEBI:15378"/>
        <dbReference type="ChEBI" id="CHEBI:16526"/>
        <dbReference type="ChEBI" id="CHEBI:57262"/>
        <dbReference type="ChEBI" id="CHEBI:64612"/>
        <dbReference type="EC" id="4.1.1.65"/>
    </reaction>
</comment>
<comment type="cofactor">
    <cofactor evidence="1">
        <name>pyruvate</name>
        <dbReference type="ChEBI" id="CHEBI:15361"/>
    </cofactor>
    <text evidence="1">Binds 1 pyruvoyl group covalently per subunit.</text>
</comment>
<comment type="pathway">
    <text evidence="1">Phospholipid metabolism; phosphatidylethanolamine biosynthesis; phosphatidylethanolamine from CDP-diacylglycerol: step 2/2.</text>
</comment>
<comment type="subunit">
    <text evidence="1">Heterodimer of a large membrane-associated beta subunit and a small pyruvoyl-containing alpha subunit.</text>
</comment>
<comment type="subcellular location">
    <subcellularLocation>
        <location evidence="1">Cell membrane</location>
        <topology evidence="1">Peripheral membrane protein</topology>
    </subcellularLocation>
</comment>
<comment type="PTM">
    <text evidence="1">Is synthesized initially as an inactive proenzyme. Formation of the active enzyme involves a self-maturation process in which the active site pyruvoyl group is generated from an internal serine residue via an autocatalytic post-translational modification. Two non-identical subunits are generated from the proenzyme in this reaction, and the pyruvate is formed at the N-terminus of the alpha chain, which is derived from the carboxyl end of the proenzyme. The post-translation cleavage follows an unusual pathway, termed non-hydrolytic serinolysis, in which the side chain hydroxyl group of the serine supplies its oxygen atom to form the C-terminus of the beta chain, while the remainder of the serine residue undergoes an oxidative deamination to produce ammonia and the pyruvoyl prosthetic group on the alpha chain.</text>
</comment>
<comment type="similarity">
    <text evidence="1">Belongs to the phosphatidylserine decarboxylase family. PSD-A subfamily.</text>
</comment>
<feature type="chain" id="PRO_0000029807" description="Phosphatidylserine decarboxylase beta chain" evidence="1">
    <location>
        <begin position="1"/>
        <end position="187"/>
    </location>
</feature>
<feature type="chain" id="PRO_0000029808" description="Phosphatidylserine decarboxylase alpha chain" evidence="1">
    <location>
        <begin position="188"/>
        <end position="231"/>
    </location>
</feature>
<feature type="active site" description="Schiff-base intermediate with substrate; via pyruvic acid" evidence="1">
    <location>
        <position position="188"/>
    </location>
</feature>
<feature type="site" description="Cleavage (non-hydrolytic); by autocatalysis" evidence="1">
    <location>
        <begin position="187"/>
        <end position="188"/>
    </location>
</feature>
<feature type="modified residue" description="Pyruvic acid (Ser); by autocatalysis" evidence="1">
    <location>
        <position position="188"/>
    </location>
</feature>
<reference key="1">
    <citation type="journal article" date="2004" name="J. Bacteriol.">
        <title>Complete genome sequence of Rickettsia typhi and comparison with sequences of other Rickettsiae.</title>
        <authorList>
            <person name="McLeod M.P."/>
            <person name="Qin X."/>
            <person name="Karpathy S.E."/>
            <person name="Gioia J."/>
            <person name="Highlander S.K."/>
            <person name="Fox G.E."/>
            <person name="McNeill T.Z."/>
            <person name="Jiang H."/>
            <person name="Muzny D."/>
            <person name="Jacob L.S."/>
            <person name="Hawes A.C."/>
            <person name="Sodergren E."/>
            <person name="Gill R."/>
            <person name="Hume J."/>
            <person name="Morgan M."/>
            <person name="Fan G."/>
            <person name="Amin A.G."/>
            <person name="Gibbs R.A."/>
            <person name="Hong C."/>
            <person name="Yu X.-J."/>
            <person name="Walker D.H."/>
            <person name="Weinstock G.M."/>
        </authorList>
    </citation>
    <scope>NUCLEOTIDE SEQUENCE [LARGE SCALE GENOMIC DNA]</scope>
    <source>
        <strain>ATCC VR-144 / Wilmington</strain>
    </source>
</reference>
<evidence type="ECO:0000255" key="1">
    <source>
        <dbReference type="HAMAP-Rule" id="MF_00664"/>
    </source>
</evidence>
<name>PSD_RICTY</name>